<accession>Q58420</accession>
<name>PSTC_METJA</name>
<protein>
    <recommendedName>
        <fullName>Probable phosphate transport system permease protein PstC</fullName>
    </recommendedName>
</protein>
<sequence length="315" mass="35263">MKTMEIKKLLRKIDEFKIITLPAIFVVFILFVLILGFYFFNALPAIERYGIDLFITNVWKAAEEPAKEVYGLAAPIWGSIYTATIAVLIALPLSICYAIFVNDYAPKRLKYPLIVISDIMAGLPTIIYGIWGAFILVPLLRDHIMKFLYEHFSFIPLFDYPPLSGYCYLSAGILLGIMVTPFAAAIIREAYAMIPSVYKEGLVALGATRYETTKVLIKYIRPAIISGLILAFGRALGETVAVSLVIGNSFNLTYKLFAPGYTISSLIANQFGNAVLYEYMTSVLYSAGLVLFVIGLVVNIIGIYYLKRWREHVSH</sequence>
<keyword id="KW-1003">Cell membrane</keyword>
<keyword id="KW-0472">Membrane</keyword>
<keyword id="KW-0592">Phosphate transport</keyword>
<keyword id="KW-1185">Reference proteome</keyword>
<keyword id="KW-0812">Transmembrane</keyword>
<keyword id="KW-1133">Transmembrane helix</keyword>
<keyword id="KW-0813">Transport</keyword>
<comment type="function">
    <text evidence="1">Part of the binding-protein-dependent transport system for phosphate; probably responsible for the translocation of the substrate across the membrane.</text>
</comment>
<comment type="subcellular location">
    <subcellularLocation>
        <location evidence="3">Cell membrane</location>
        <topology evidence="2">Multi-pass membrane protein</topology>
    </subcellularLocation>
</comment>
<comment type="similarity">
    <text evidence="3">Belongs to the binding-protein-dependent transport system permease family. CysTW subfamily.</text>
</comment>
<dbReference type="EMBL" id="L77117">
    <property type="protein sequence ID" value="AAB99018.1"/>
    <property type="molecule type" value="Genomic_DNA"/>
</dbReference>
<dbReference type="PIR" id="E64426">
    <property type="entry name" value="E64426"/>
</dbReference>
<dbReference type="FunCoup" id="Q58420">
    <property type="interactions" value="5"/>
</dbReference>
<dbReference type="STRING" id="243232.MJ_1014"/>
<dbReference type="PaxDb" id="243232-MJ_1014"/>
<dbReference type="EnsemblBacteria" id="AAB99018">
    <property type="protein sequence ID" value="AAB99018"/>
    <property type="gene ID" value="MJ_1014"/>
</dbReference>
<dbReference type="KEGG" id="mja:MJ_1014"/>
<dbReference type="eggNOG" id="arCOG00167">
    <property type="taxonomic scope" value="Archaea"/>
</dbReference>
<dbReference type="HOGENOM" id="CLU_033621_1_3_2"/>
<dbReference type="InParanoid" id="Q58420"/>
<dbReference type="PhylomeDB" id="Q58420"/>
<dbReference type="Proteomes" id="UP000000805">
    <property type="component" value="Chromosome"/>
</dbReference>
<dbReference type="GO" id="GO:0005886">
    <property type="term" value="C:plasma membrane"/>
    <property type="evidence" value="ECO:0000318"/>
    <property type="project" value="GO_Central"/>
</dbReference>
<dbReference type="GO" id="GO:0005315">
    <property type="term" value="F:phosphate transmembrane transporter activity"/>
    <property type="evidence" value="ECO:0007669"/>
    <property type="project" value="InterPro"/>
</dbReference>
<dbReference type="GO" id="GO:0035435">
    <property type="term" value="P:phosphate ion transmembrane transport"/>
    <property type="evidence" value="ECO:0000318"/>
    <property type="project" value="GO_Central"/>
</dbReference>
<dbReference type="CDD" id="cd06261">
    <property type="entry name" value="TM_PBP2"/>
    <property type="match status" value="1"/>
</dbReference>
<dbReference type="Gene3D" id="1.10.3720.10">
    <property type="entry name" value="MetI-like"/>
    <property type="match status" value="1"/>
</dbReference>
<dbReference type="InterPro" id="IPR000515">
    <property type="entry name" value="MetI-like"/>
</dbReference>
<dbReference type="InterPro" id="IPR035906">
    <property type="entry name" value="MetI-like_sf"/>
</dbReference>
<dbReference type="InterPro" id="IPR011864">
    <property type="entry name" value="Phosphate_PstC"/>
</dbReference>
<dbReference type="InterPro" id="IPR051124">
    <property type="entry name" value="Phosphate_Transport_Permease"/>
</dbReference>
<dbReference type="NCBIfam" id="TIGR02138">
    <property type="entry name" value="phosphate_pstC"/>
    <property type="match status" value="1"/>
</dbReference>
<dbReference type="PANTHER" id="PTHR30425">
    <property type="entry name" value="PHOSPHATE TRANSPORT SYSTEM PERMEASE PROTEIN PST"/>
    <property type="match status" value="1"/>
</dbReference>
<dbReference type="PANTHER" id="PTHR30425:SF1">
    <property type="entry name" value="PHOSPHATE TRANSPORT SYSTEM PERMEASE PROTEIN PSTC"/>
    <property type="match status" value="1"/>
</dbReference>
<dbReference type="Pfam" id="PF00528">
    <property type="entry name" value="BPD_transp_1"/>
    <property type="match status" value="1"/>
</dbReference>
<dbReference type="SUPFAM" id="SSF161098">
    <property type="entry name" value="MetI-like"/>
    <property type="match status" value="1"/>
</dbReference>
<dbReference type="PROSITE" id="PS50928">
    <property type="entry name" value="ABC_TM1"/>
    <property type="match status" value="1"/>
</dbReference>
<organism>
    <name type="scientific">Methanocaldococcus jannaschii (strain ATCC 43067 / DSM 2661 / JAL-1 / JCM 10045 / NBRC 100440)</name>
    <name type="common">Methanococcus jannaschii</name>
    <dbReference type="NCBI Taxonomy" id="243232"/>
    <lineage>
        <taxon>Archaea</taxon>
        <taxon>Methanobacteriati</taxon>
        <taxon>Methanobacteriota</taxon>
        <taxon>Methanomada group</taxon>
        <taxon>Methanococci</taxon>
        <taxon>Methanococcales</taxon>
        <taxon>Methanocaldococcaceae</taxon>
        <taxon>Methanocaldococcus</taxon>
    </lineage>
</organism>
<gene>
    <name type="primary">pstC</name>
    <name type="ordered locus">MJ1014</name>
</gene>
<feature type="chain" id="PRO_0000060220" description="Probable phosphate transport system permease protein PstC">
    <location>
        <begin position="1"/>
        <end position="315"/>
    </location>
</feature>
<feature type="transmembrane region" description="Helical" evidence="2">
    <location>
        <begin position="18"/>
        <end position="38"/>
    </location>
</feature>
<feature type="transmembrane region" description="Helical" evidence="2">
    <location>
        <begin position="80"/>
        <end position="100"/>
    </location>
</feature>
<feature type="transmembrane region" description="Helical" evidence="2">
    <location>
        <begin position="119"/>
        <end position="139"/>
    </location>
</feature>
<feature type="transmembrane region" description="Helical" evidence="2">
    <location>
        <begin position="167"/>
        <end position="187"/>
    </location>
</feature>
<feature type="transmembrane region" description="Helical" evidence="2">
    <location>
        <begin position="227"/>
        <end position="247"/>
    </location>
</feature>
<feature type="transmembrane region" description="Helical" evidence="2">
    <location>
        <begin position="283"/>
        <end position="303"/>
    </location>
</feature>
<feature type="domain" description="ABC transmembrane type-1" evidence="2">
    <location>
        <begin position="76"/>
        <end position="302"/>
    </location>
</feature>
<evidence type="ECO:0000250" key="1"/>
<evidence type="ECO:0000255" key="2">
    <source>
        <dbReference type="PROSITE-ProRule" id="PRU00441"/>
    </source>
</evidence>
<evidence type="ECO:0000305" key="3"/>
<reference key="1">
    <citation type="journal article" date="1996" name="Science">
        <title>Complete genome sequence of the methanogenic archaeon, Methanococcus jannaschii.</title>
        <authorList>
            <person name="Bult C.J."/>
            <person name="White O."/>
            <person name="Olsen G.J."/>
            <person name="Zhou L."/>
            <person name="Fleischmann R.D."/>
            <person name="Sutton G.G."/>
            <person name="Blake J.A."/>
            <person name="FitzGerald L.M."/>
            <person name="Clayton R.A."/>
            <person name="Gocayne J.D."/>
            <person name="Kerlavage A.R."/>
            <person name="Dougherty B.A."/>
            <person name="Tomb J.-F."/>
            <person name="Adams M.D."/>
            <person name="Reich C.I."/>
            <person name="Overbeek R."/>
            <person name="Kirkness E.F."/>
            <person name="Weinstock K.G."/>
            <person name="Merrick J.M."/>
            <person name="Glodek A."/>
            <person name="Scott J.L."/>
            <person name="Geoghagen N.S.M."/>
            <person name="Weidman J.F."/>
            <person name="Fuhrmann J.L."/>
            <person name="Nguyen D."/>
            <person name="Utterback T.R."/>
            <person name="Kelley J.M."/>
            <person name="Peterson J.D."/>
            <person name="Sadow P.W."/>
            <person name="Hanna M.C."/>
            <person name="Cotton M.D."/>
            <person name="Roberts K.M."/>
            <person name="Hurst M.A."/>
            <person name="Kaine B.P."/>
            <person name="Borodovsky M."/>
            <person name="Klenk H.-P."/>
            <person name="Fraser C.M."/>
            <person name="Smith H.O."/>
            <person name="Woese C.R."/>
            <person name="Venter J.C."/>
        </authorList>
    </citation>
    <scope>NUCLEOTIDE SEQUENCE [LARGE SCALE GENOMIC DNA]</scope>
    <source>
        <strain>ATCC 43067 / DSM 2661 / JAL-1 / JCM 10045 / NBRC 100440</strain>
    </source>
</reference>
<proteinExistence type="inferred from homology"/>